<sequence>MNNIIIKCINLNKSYKDGDFTYTILKNISFQLNKGDIAGIIGKSGSGKTTFLHLLAGLENPTSGDILFNGRLFSSMSSNKMSKFRNIELGFIYQFHHLMLDFNILENVSMPLLISNKSKKDSEEIAYNMLKKFNLEDKIKKYPSELSGGERQRVAVARAFINKPSLIIADEPTGNLDEDNTNIIFNLITELNSDYNTSFIIATHDPTLIKKIPVLFKIENNQIFNYES</sequence>
<keyword id="KW-0067">ATP-binding</keyword>
<keyword id="KW-0997">Cell inner membrane</keyword>
<keyword id="KW-1003">Cell membrane</keyword>
<keyword id="KW-0472">Membrane</keyword>
<keyword id="KW-0547">Nucleotide-binding</keyword>
<keyword id="KW-1185">Reference proteome</keyword>
<keyword id="KW-1278">Translocase</keyword>
<keyword id="KW-0813">Transport</keyword>
<proteinExistence type="inferred from homology"/>
<reference key="1">
    <citation type="journal article" date="2000" name="Nature">
        <title>Genome sequence of the endocellular bacterial symbiont of aphids Buchnera sp. APS.</title>
        <authorList>
            <person name="Shigenobu S."/>
            <person name="Watanabe H."/>
            <person name="Hattori M."/>
            <person name="Sakaki Y."/>
            <person name="Ishikawa H."/>
        </authorList>
    </citation>
    <scope>NUCLEOTIDE SEQUENCE [LARGE SCALE GENOMIC DNA]</scope>
    <source>
        <strain>APS</strain>
    </source>
</reference>
<name>LOLD_BUCAI</name>
<comment type="function">
    <text>Usually LolD forms an ABC transporter complex with LolC and LolE involved in the translocation of lipoprotein, in an ATP-dependent manner. However, LolE is certainly not functional as it is frameshifted.</text>
</comment>
<comment type="subcellular location">
    <subcellularLocation>
        <location evidence="1">Cell inner membrane</location>
        <topology evidence="1">Peripheral membrane protein</topology>
    </subcellularLocation>
</comment>
<comment type="similarity">
    <text evidence="1">Belongs to the ABC transporter superfamily. Lipoprotein translocase (TC 3.A.1.125) family.</text>
</comment>
<organism>
    <name type="scientific">Buchnera aphidicola subsp. Acyrthosiphon pisum (strain APS)</name>
    <name type="common">Acyrthosiphon pisum symbiotic bacterium</name>
    <dbReference type="NCBI Taxonomy" id="107806"/>
    <lineage>
        <taxon>Bacteria</taxon>
        <taxon>Pseudomonadati</taxon>
        <taxon>Pseudomonadota</taxon>
        <taxon>Gammaproteobacteria</taxon>
        <taxon>Enterobacterales</taxon>
        <taxon>Erwiniaceae</taxon>
        <taxon>Buchnera</taxon>
    </lineage>
</organism>
<accession>P57383</accession>
<protein>
    <recommendedName>
        <fullName evidence="1">Lipoprotein-releasing system ATP-binding protein LolD</fullName>
        <ecNumber evidence="1">7.6.2.-</ecNumber>
    </recommendedName>
</protein>
<dbReference type="EC" id="7.6.2.-" evidence="1"/>
<dbReference type="EMBL" id="BA000003">
    <property type="protein sequence ID" value="BAB13006.1"/>
    <property type="molecule type" value="Genomic_DNA"/>
</dbReference>
<dbReference type="RefSeq" id="NP_240120.1">
    <property type="nucleotide sequence ID" value="NC_002528.1"/>
</dbReference>
<dbReference type="RefSeq" id="WP_010896054.1">
    <property type="nucleotide sequence ID" value="NZ_AP036055.1"/>
</dbReference>
<dbReference type="SMR" id="P57383"/>
<dbReference type="STRING" id="563178.BUAP5A_291"/>
<dbReference type="EnsemblBacteria" id="BAB13006">
    <property type="protein sequence ID" value="BAB13006"/>
    <property type="gene ID" value="BAB13006"/>
</dbReference>
<dbReference type="KEGG" id="buc:BU296"/>
<dbReference type="PATRIC" id="fig|107806.10.peg.306"/>
<dbReference type="eggNOG" id="COG1136">
    <property type="taxonomic scope" value="Bacteria"/>
</dbReference>
<dbReference type="HOGENOM" id="CLU_000604_1_22_6"/>
<dbReference type="Proteomes" id="UP000001806">
    <property type="component" value="Chromosome"/>
</dbReference>
<dbReference type="GO" id="GO:0005886">
    <property type="term" value="C:plasma membrane"/>
    <property type="evidence" value="ECO:0007669"/>
    <property type="project" value="UniProtKB-SubCell"/>
</dbReference>
<dbReference type="GO" id="GO:0005524">
    <property type="term" value="F:ATP binding"/>
    <property type="evidence" value="ECO:0007669"/>
    <property type="project" value="UniProtKB-KW"/>
</dbReference>
<dbReference type="GO" id="GO:0016887">
    <property type="term" value="F:ATP hydrolysis activity"/>
    <property type="evidence" value="ECO:0007669"/>
    <property type="project" value="InterPro"/>
</dbReference>
<dbReference type="GO" id="GO:0044873">
    <property type="term" value="P:lipoprotein localization to membrane"/>
    <property type="evidence" value="ECO:0007669"/>
    <property type="project" value="InterPro"/>
</dbReference>
<dbReference type="CDD" id="cd03255">
    <property type="entry name" value="ABC_MJ0796_LolCDE_FtsE"/>
    <property type="match status" value="1"/>
</dbReference>
<dbReference type="Gene3D" id="3.40.50.300">
    <property type="entry name" value="P-loop containing nucleotide triphosphate hydrolases"/>
    <property type="match status" value="1"/>
</dbReference>
<dbReference type="InterPro" id="IPR003593">
    <property type="entry name" value="AAA+_ATPase"/>
</dbReference>
<dbReference type="InterPro" id="IPR003439">
    <property type="entry name" value="ABC_transporter-like_ATP-bd"/>
</dbReference>
<dbReference type="InterPro" id="IPR017871">
    <property type="entry name" value="ABC_transporter-like_CS"/>
</dbReference>
<dbReference type="InterPro" id="IPR011924">
    <property type="entry name" value="LolD_lipo_ATP-bd"/>
</dbReference>
<dbReference type="InterPro" id="IPR017911">
    <property type="entry name" value="MacB-like_ATP-bd"/>
</dbReference>
<dbReference type="InterPro" id="IPR027417">
    <property type="entry name" value="P-loop_NTPase"/>
</dbReference>
<dbReference type="NCBIfam" id="TIGR02211">
    <property type="entry name" value="LolD_lipo_ex"/>
    <property type="match status" value="1"/>
</dbReference>
<dbReference type="PANTHER" id="PTHR42798:SF7">
    <property type="entry name" value="ALPHA-D-RIBOSE 1-METHYLPHOSPHONATE 5-TRIPHOSPHATE SYNTHASE SUBUNIT PHNL"/>
    <property type="match status" value="1"/>
</dbReference>
<dbReference type="PANTHER" id="PTHR42798">
    <property type="entry name" value="LIPOPROTEIN-RELEASING SYSTEM ATP-BINDING PROTEIN LOLD"/>
    <property type="match status" value="1"/>
</dbReference>
<dbReference type="Pfam" id="PF00005">
    <property type="entry name" value="ABC_tran"/>
    <property type="match status" value="1"/>
</dbReference>
<dbReference type="SMART" id="SM00382">
    <property type="entry name" value="AAA"/>
    <property type="match status" value="1"/>
</dbReference>
<dbReference type="SUPFAM" id="SSF52540">
    <property type="entry name" value="P-loop containing nucleoside triphosphate hydrolases"/>
    <property type="match status" value="1"/>
</dbReference>
<dbReference type="PROSITE" id="PS00211">
    <property type="entry name" value="ABC_TRANSPORTER_1"/>
    <property type="match status" value="1"/>
</dbReference>
<dbReference type="PROSITE" id="PS50893">
    <property type="entry name" value="ABC_TRANSPORTER_2"/>
    <property type="match status" value="1"/>
</dbReference>
<dbReference type="PROSITE" id="PS51244">
    <property type="entry name" value="LOLD"/>
    <property type="match status" value="1"/>
</dbReference>
<evidence type="ECO:0000255" key="1">
    <source>
        <dbReference type="HAMAP-Rule" id="MF_01708"/>
    </source>
</evidence>
<feature type="chain" id="PRO_0000092425" description="Lipoprotein-releasing system ATP-binding protein LolD">
    <location>
        <begin position="1"/>
        <end position="228"/>
    </location>
</feature>
<feature type="domain" description="ABC transporter" evidence="1">
    <location>
        <begin position="6"/>
        <end position="228"/>
    </location>
</feature>
<feature type="binding site" evidence="1">
    <location>
        <begin position="42"/>
        <end position="49"/>
    </location>
    <ligand>
        <name>ATP</name>
        <dbReference type="ChEBI" id="CHEBI:30616"/>
    </ligand>
</feature>
<gene>
    <name evidence="1" type="primary">lolD</name>
    <name type="ordered locus">BU296</name>
</gene>